<organism>
    <name type="scientific">Arabidopsis thaliana</name>
    <name type="common">Mouse-ear cress</name>
    <dbReference type="NCBI Taxonomy" id="3702"/>
    <lineage>
        <taxon>Eukaryota</taxon>
        <taxon>Viridiplantae</taxon>
        <taxon>Streptophyta</taxon>
        <taxon>Embryophyta</taxon>
        <taxon>Tracheophyta</taxon>
        <taxon>Spermatophyta</taxon>
        <taxon>Magnoliopsida</taxon>
        <taxon>eudicotyledons</taxon>
        <taxon>Gunneridae</taxon>
        <taxon>Pentapetalae</taxon>
        <taxon>rosids</taxon>
        <taxon>malvids</taxon>
        <taxon>Brassicales</taxon>
        <taxon>Brassicaceae</taxon>
        <taxon>Camelineae</taxon>
        <taxon>Arabidopsis</taxon>
    </lineage>
</organism>
<keyword id="KW-0256">Endoplasmic reticulum</keyword>
<keyword id="KW-0472">Membrane</keyword>
<keyword id="KW-1185">Reference proteome</keyword>
<keyword id="KW-0812">Transmembrane</keyword>
<keyword id="KW-1133">Transmembrane helix</keyword>
<accession>Q944J0</accession>
<accession>Q7G9Y5</accession>
<dbReference type="EMBL" id="AC006592">
    <property type="protein sequence ID" value="AAM15302.1"/>
    <property type="molecule type" value="Genomic_DNA"/>
</dbReference>
<dbReference type="EMBL" id="CP002685">
    <property type="protein sequence ID" value="AEC07302.1"/>
    <property type="molecule type" value="Genomic_DNA"/>
</dbReference>
<dbReference type="EMBL" id="CP002685">
    <property type="protein sequence ID" value="AEC07303.1"/>
    <property type="molecule type" value="Genomic_DNA"/>
</dbReference>
<dbReference type="EMBL" id="AF428383">
    <property type="protein sequence ID" value="AAL16151.1"/>
    <property type="molecule type" value="mRNA"/>
</dbReference>
<dbReference type="EMBL" id="AY143801">
    <property type="protein sequence ID" value="AAN28740.1"/>
    <property type="molecule type" value="mRNA"/>
</dbReference>
<dbReference type="EMBL" id="AY087762">
    <property type="protein sequence ID" value="AAM65298.1"/>
    <property type="molecule type" value="mRNA"/>
</dbReference>
<dbReference type="RefSeq" id="NP_001077942.1">
    <property type="nucleotide sequence ID" value="NM_001084473.2"/>
</dbReference>
<dbReference type="RefSeq" id="NP_565535.1">
    <property type="nucleotide sequence ID" value="NM_127807.4"/>
</dbReference>
<dbReference type="SMR" id="Q944J0"/>
<dbReference type="BioGRID" id="2127">
    <property type="interactions" value="172"/>
</dbReference>
<dbReference type="FunCoup" id="Q944J0">
    <property type="interactions" value="1595"/>
</dbReference>
<dbReference type="IntAct" id="Q944J0">
    <property type="interactions" value="172"/>
</dbReference>
<dbReference type="STRING" id="3702.Q944J0"/>
<dbReference type="PaxDb" id="3702-AT2G22425.1"/>
<dbReference type="ProteomicsDB" id="232632"/>
<dbReference type="EnsemblPlants" id="AT2G22425.1">
    <property type="protein sequence ID" value="AT2G22425.1"/>
    <property type="gene ID" value="AT2G22425"/>
</dbReference>
<dbReference type="EnsemblPlants" id="AT2G22425.2">
    <property type="protein sequence ID" value="AT2G22425.2"/>
    <property type="gene ID" value="AT2G22425"/>
</dbReference>
<dbReference type="GeneID" id="816774"/>
<dbReference type="Gramene" id="AT2G22425.1">
    <property type="protein sequence ID" value="AT2G22425.1"/>
    <property type="gene ID" value="AT2G22425"/>
</dbReference>
<dbReference type="Gramene" id="AT2G22425.2">
    <property type="protein sequence ID" value="AT2G22425.2"/>
    <property type="gene ID" value="AT2G22425"/>
</dbReference>
<dbReference type="KEGG" id="ath:AT2G22425"/>
<dbReference type="Araport" id="AT2G22425"/>
<dbReference type="TAIR" id="AT2G22425"/>
<dbReference type="eggNOG" id="KOG4112">
    <property type="taxonomic scope" value="Eukaryota"/>
</dbReference>
<dbReference type="HOGENOM" id="CLU_134505_0_1_1"/>
<dbReference type="InParanoid" id="Q944J0"/>
<dbReference type="OMA" id="CTPAWIY"/>
<dbReference type="PhylomeDB" id="Q944J0"/>
<dbReference type="PRO" id="PR:Q944J0"/>
<dbReference type="Proteomes" id="UP000006548">
    <property type="component" value="Chromosome 2"/>
</dbReference>
<dbReference type="ExpressionAtlas" id="Q944J0">
    <property type="expression patterns" value="baseline and differential"/>
</dbReference>
<dbReference type="GO" id="GO:0005787">
    <property type="term" value="C:signal peptidase complex"/>
    <property type="evidence" value="ECO:0007669"/>
    <property type="project" value="InterPro"/>
</dbReference>
<dbReference type="GO" id="GO:0006465">
    <property type="term" value="P:signal peptide processing"/>
    <property type="evidence" value="ECO:0007669"/>
    <property type="project" value="InterPro"/>
</dbReference>
<dbReference type="InterPro" id="IPR009542">
    <property type="entry name" value="Spc1/SPCS1"/>
</dbReference>
<dbReference type="PANTHER" id="PTHR13202">
    <property type="entry name" value="MICROSOMAL SIGNAL PEPTIDASE 12 KDA SUBUNIT"/>
    <property type="match status" value="1"/>
</dbReference>
<dbReference type="PANTHER" id="PTHR13202:SF4">
    <property type="entry name" value="SIGNAL PEPTIDASE COMPLEX SUBUNIT 1"/>
    <property type="match status" value="1"/>
</dbReference>
<dbReference type="Pfam" id="PF06645">
    <property type="entry name" value="SPC12"/>
    <property type="match status" value="1"/>
</dbReference>
<feature type="chain" id="PRO_0000215160" description="Signal peptidase complex subunit 1">
    <location>
        <begin position="1"/>
        <end position="92"/>
    </location>
</feature>
<feature type="topological domain" description="Cytoplasmic" evidence="2">
    <location>
        <begin position="1"/>
        <end position="12"/>
    </location>
</feature>
<feature type="transmembrane region" description="Helical" evidence="4">
    <location>
        <begin position="13"/>
        <end position="30"/>
    </location>
</feature>
<feature type="topological domain" description="Lumenal" evidence="2">
    <location>
        <begin position="31"/>
        <end position="36"/>
    </location>
</feature>
<feature type="transmembrane region" description="Helical" evidence="4">
    <location>
        <begin position="37"/>
        <end position="59"/>
    </location>
</feature>
<feature type="topological domain" description="Cytoplasmic" evidence="2">
    <location>
        <begin position="60"/>
        <end position="92"/>
    </location>
</feature>
<feature type="region of interest" description="Disordered" evidence="5">
    <location>
        <begin position="73"/>
        <end position="92"/>
    </location>
</feature>
<comment type="function">
    <text evidence="1 3">Component of the signal peptidase complex (SPC) which catalyzes the cleavage of N-terminal signal sequences from nascent proteins as they are translocated into the lumen of the endoplasmic reticulum (By similarity). Dispensable for SPC enzymatic activity (By similarity).</text>
</comment>
<comment type="subunit">
    <text evidence="3">Component of the signal peptidase complex (SPC) composed of a catalytic subunit SEC11 and three accessory subunits SPCS1, SPCS2 and SPCS3. The complex induces a local thinning of the ER membrane which is used to measure the length of the signal peptide (SP) h-region of protein substrates. This ensures the selectivity of the complex towards h-regions shorter than 18-20 amino acids.</text>
</comment>
<comment type="subcellular location">
    <subcellularLocation>
        <location evidence="2">Endoplasmic reticulum membrane</location>
        <topology evidence="2">Multi-pass membrane protein</topology>
    </subcellularLocation>
</comment>
<comment type="similarity">
    <text evidence="6">Belongs to the SPCS1 family.</text>
</comment>
<proteinExistence type="inferred from homology"/>
<protein>
    <recommendedName>
        <fullName>Signal peptidase complex subunit 1</fullName>
    </recommendedName>
    <alternativeName>
        <fullName>Microsomal signal peptidase 12 kDa subunit</fullName>
        <shortName>SPase 12 kDa subunit</shortName>
    </alternativeName>
</protein>
<evidence type="ECO:0000250" key="1">
    <source>
        <dbReference type="UniProtKB" id="P46965"/>
    </source>
</evidence>
<evidence type="ECO:0000250" key="2">
    <source>
        <dbReference type="UniProtKB" id="P83362"/>
    </source>
</evidence>
<evidence type="ECO:0000250" key="3">
    <source>
        <dbReference type="UniProtKB" id="Q9Y6A9"/>
    </source>
</evidence>
<evidence type="ECO:0000255" key="4"/>
<evidence type="ECO:0000256" key="5">
    <source>
        <dbReference type="SAM" id="MobiDB-lite"/>
    </source>
</evidence>
<evidence type="ECO:0000305" key="6"/>
<name>SPCS1_ARATH</name>
<gene>
    <name type="ordered locus">At2g22425</name>
    <name type="ORF">F14M13.3</name>
</gene>
<sequence>MDWQGQKLVEQLMQILLVISGVVAVVVGYTTESFRTMMLIYAGGVVLTTLVTVPNWPFYNLHPLKWLDPSEAEKHPKPEVVSVASKKKFSKK</sequence>
<reference key="1">
    <citation type="journal article" date="1999" name="Nature">
        <title>Sequence and analysis of chromosome 2 of the plant Arabidopsis thaliana.</title>
        <authorList>
            <person name="Lin X."/>
            <person name="Kaul S."/>
            <person name="Rounsley S.D."/>
            <person name="Shea T.P."/>
            <person name="Benito M.-I."/>
            <person name="Town C.D."/>
            <person name="Fujii C.Y."/>
            <person name="Mason T.M."/>
            <person name="Bowman C.L."/>
            <person name="Barnstead M.E."/>
            <person name="Feldblyum T.V."/>
            <person name="Buell C.R."/>
            <person name="Ketchum K.A."/>
            <person name="Lee J.J."/>
            <person name="Ronning C.M."/>
            <person name="Koo H.L."/>
            <person name="Moffat K.S."/>
            <person name="Cronin L.A."/>
            <person name="Shen M."/>
            <person name="Pai G."/>
            <person name="Van Aken S."/>
            <person name="Umayam L."/>
            <person name="Tallon L.J."/>
            <person name="Gill J.E."/>
            <person name="Adams M.D."/>
            <person name="Carrera A.J."/>
            <person name="Creasy T.H."/>
            <person name="Goodman H.M."/>
            <person name="Somerville C.R."/>
            <person name="Copenhaver G.P."/>
            <person name="Preuss D."/>
            <person name="Nierman W.C."/>
            <person name="White O."/>
            <person name="Eisen J.A."/>
            <person name="Salzberg S.L."/>
            <person name="Fraser C.M."/>
            <person name="Venter J.C."/>
        </authorList>
    </citation>
    <scope>NUCLEOTIDE SEQUENCE [LARGE SCALE GENOMIC DNA]</scope>
    <source>
        <strain>cv. Columbia</strain>
    </source>
</reference>
<reference key="2">
    <citation type="journal article" date="2017" name="Plant J.">
        <title>Araport11: a complete reannotation of the Arabidopsis thaliana reference genome.</title>
        <authorList>
            <person name="Cheng C.Y."/>
            <person name="Krishnakumar V."/>
            <person name="Chan A.P."/>
            <person name="Thibaud-Nissen F."/>
            <person name="Schobel S."/>
            <person name="Town C.D."/>
        </authorList>
    </citation>
    <scope>GENOME REANNOTATION</scope>
    <source>
        <strain>cv. Columbia</strain>
    </source>
</reference>
<reference key="3">
    <citation type="journal article" date="2003" name="Science">
        <title>Empirical analysis of transcriptional activity in the Arabidopsis genome.</title>
        <authorList>
            <person name="Yamada K."/>
            <person name="Lim J."/>
            <person name="Dale J.M."/>
            <person name="Chen H."/>
            <person name="Shinn P."/>
            <person name="Palm C.J."/>
            <person name="Southwick A.M."/>
            <person name="Wu H.C."/>
            <person name="Kim C.J."/>
            <person name="Nguyen M."/>
            <person name="Pham P.K."/>
            <person name="Cheuk R.F."/>
            <person name="Karlin-Newmann G."/>
            <person name="Liu S.X."/>
            <person name="Lam B."/>
            <person name="Sakano H."/>
            <person name="Wu T."/>
            <person name="Yu G."/>
            <person name="Miranda M."/>
            <person name="Quach H.L."/>
            <person name="Tripp M."/>
            <person name="Chang C.H."/>
            <person name="Lee J.M."/>
            <person name="Toriumi M.J."/>
            <person name="Chan M.M."/>
            <person name="Tang C.C."/>
            <person name="Onodera C.S."/>
            <person name="Deng J.M."/>
            <person name="Akiyama K."/>
            <person name="Ansari Y."/>
            <person name="Arakawa T."/>
            <person name="Banh J."/>
            <person name="Banno F."/>
            <person name="Bowser L."/>
            <person name="Brooks S.Y."/>
            <person name="Carninci P."/>
            <person name="Chao Q."/>
            <person name="Choy N."/>
            <person name="Enju A."/>
            <person name="Goldsmith A.D."/>
            <person name="Gurjal M."/>
            <person name="Hansen N.F."/>
            <person name="Hayashizaki Y."/>
            <person name="Johnson-Hopson C."/>
            <person name="Hsuan V.W."/>
            <person name="Iida K."/>
            <person name="Karnes M."/>
            <person name="Khan S."/>
            <person name="Koesema E."/>
            <person name="Ishida J."/>
            <person name="Jiang P.X."/>
            <person name="Jones T."/>
            <person name="Kawai J."/>
            <person name="Kamiya A."/>
            <person name="Meyers C."/>
            <person name="Nakajima M."/>
            <person name="Narusaka M."/>
            <person name="Seki M."/>
            <person name="Sakurai T."/>
            <person name="Satou M."/>
            <person name="Tamse R."/>
            <person name="Vaysberg M."/>
            <person name="Wallender E.K."/>
            <person name="Wong C."/>
            <person name="Yamamura Y."/>
            <person name="Yuan S."/>
            <person name="Shinozaki K."/>
            <person name="Davis R.W."/>
            <person name="Theologis A."/>
            <person name="Ecker J.R."/>
        </authorList>
    </citation>
    <scope>NUCLEOTIDE SEQUENCE [LARGE SCALE MRNA]</scope>
    <source>
        <strain>cv. Columbia</strain>
    </source>
</reference>
<reference key="4">
    <citation type="submission" date="2002-03" db="EMBL/GenBank/DDBJ databases">
        <title>Full-length cDNA from Arabidopsis thaliana.</title>
        <authorList>
            <person name="Brover V.V."/>
            <person name="Troukhan M.E."/>
            <person name="Alexandrov N.A."/>
            <person name="Lu Y.-P."/>
            <person name="Flavell R.B."/>
            <person name="Feldmann K.A."/>
        </authorList>
    </citation>
    <scope>NUCLEOTIDE SEQUENCE [LARGE SCALE MRNA]</scope>
</reference>